<keyword id="KW-0028">Amino-acid biosynthesis</keyword>
<keyword id="KW-0067">ATP-binding</keyword>
<keyword id="KW-0963">Cytoplasm</keyword>
<keyword id="KW-0328">Glycosyltransferase</keyword>
<keyword id="KW-0368">Histidine biosynthesis</keyword>
<keyword id="KW-0547">Nucleotide-binding</keyword>
<keyword id="KW-0808">Transferase</keyword>
<reference key="1">
    <citation type="submission" date="2008-10" db="EMBL/GenBank/DDBJ databases">
        <title>Genome sequence of Bacillus cereus AH187.</title>
        <authorList>
            <person name="Dodson R.J."/>
            <person name="Durkin A.S."/>
            <person name="Rosovitz M.J."/>
            <person name="Rasko D.A."/>
            <person name="Kolsto A.B."/>
            <person name="Okstad O.A."/>
            <person name="Ravel J."/>
            <person name="Sutton G."/>
        </authorList>
    </citation>
    <scope>NUCLEOTIDE SEQUENCE [LARGE SCALE GENOMIC DNA]</scope>
    <source>
        <strain>AH187</strain>
    </source>
</reference>
<dbReference type="EC" id="2.4.2.17" evidence="1"/>
<dbReference type="EMBL" id="CP001177">
    <property type="protein sequence ID" value="ACJ77865.1"/>
    <property type="molecule type" value="Genomic_DNA"/>
</dbReference>
<dbReference type="SMR" id="B7HKC9"/>
<dbReference type="KEGG" id="bcr:BCAH187_A1564"/>
<dbReference type="HOGENOM" id="CLU_038115_2_0_9"/>
<dbReference type="UniPathway" id="UPA00031">
    <property type="reaction ID" value="UER00006"/>
</dbReference>
<dbReference type="Proteomes" id="UP000002214">
    <property type="component" value="Chromosome"/>
</dbReference>
<dbReference type="GO" id="GO:0005737">
    <property type="term" value="C:cytoplasm"/>
    <property type="evidence" value="ECO:0007669"/>
    <property type="project" value="UniProtKB-SubCell"/>
</dbReference>
<dbReference type="GO" id="GO:0005524">
    <property type="term" value="F:ATP binding"/>
    <property type="evidence" value="ECO:0007669"/>
    <property type="project" value="UniProtKB-KW"/>
</dbReference>
<dbReference type="GO" id="GO:0003879">
    <property type="term" value="F:ATP phosphoribosyltransferase activity"/>
    <property type="evidence" value="ECO:0007669"/>
    <property type="project" value="UniProtKB-UniRule"/>
</dbReference>
<dbReference type="GO" id="GO:0000105">
    <property type="term" value="P:L-histidine biosynthetic process"/>
    <property type="evidence" value="ECO:0007669"/>
    <property type="project" value="UniProtKB-UniRule"/>
</dbReference>
<dbReference type="CDD" id="cd13595">
    <property type="entry name" value="PBP2_HisGs"/>
    <property type="match status" value="1"/>
</dbReference>
<dbReference type="FunFam" id="3.40.190.10:FF:000011">
    <property type="entry name" value="ATP phosphoribosyltransferase"/>
    <property type="match status" value="1"/>
</dbReference>
<dbReference type="Gene3D" id="3.40.190.10">
    <property type="entry name" value="Periplasmic binding protein-like II"/>
    <property type="match status" value="2"/>
</dbReference>
<dbReference type="HAMAP" id="MF_01018">
    <property type="entry name" value="HisG_Short"/>
    <property type="match status" value="1"/>
</dbReference>
<dbReference type="InterPro" id="IPR013820">
    <property type="entry name" value="ATP_PRibTrfase_cat"/>
</dbReference>
<dbReference type="InterPro" id="IPR018198">
    <property type="entry name" value="ATP_PRibTrfase_CS"/>
</dbReference>
<dbReference type="InterPro" id="IPR001348">
    <property type="entry name" value="ATP_PRibTrfase_HisG"/>
</dbReference>
<dbReference type="InterPro" id="IPR024893">
    <property type="entry name" value="ATP_PRibTrfase_HisG_short"/>
</dbReference>
<dbReference type="NCBIfam" id="TIGR00070">
    <property type="entry name" value="hisG"/>
    <property type="match status" value="1"/>
</dbReference>
<dbReference type="PANTHER" id="PTHR21403:SF8">
    <property type="entry name" value="ATP PHOSPHORIBOSYLTRANSFERASE"/>
    <property type="match status" value="1"/>
</dbReference>
<dbReference type="PANTHER" id="PTHR21403">
    <property type="entry name" value="ATP PHOSPHORIBOSYLTRANSFERASE ATP-PRTASE"/>
    <property type="match status" value="1"/>
</dbReference>
<dbReference type="Pfam" id="PF01634">
    <property type="entry name" value="HisG"/>
    <property type="match status" value="1"/>
</dbReference>
<dbReference type="SUPFAM" id="SSF53850">
    <property type="entry name" value="Periplasmic binding protein-like II"/>
    <property type="match status" value="1"/>
</dbReference>
<dbReference type="PROSITE" id="PS01316">
    <property type="entry name" value="ATP_P_PHORIBOSYLTR"/>
    <property type="match status" value="1"/>
</dbReference>
<accession>B7HKC9</accession>
<proteinExistence type="inferred from homology"/>
<sequence length="211" mass="23586">MRNIQIALTKGRLEKHVIPLFEQIGIDCSELKNKGRKLVFQSKNTDISFILVKAVDVATYVEHGVADIGVVGKDILMENEKDIYEMLDLGVGVCKFCVASIPTYNPKSYRKKCIATKYPHITSNYFHDKGEDVEIIKIEGSVEIAPILGLADAIVDIVETGKTLQENGLIVFEEMYSISARMIVNKAALKTKKDEIFSIINMMEQEILSGK</sequence>
<evidence type="ECO:0000255" key="1">
    <source>
        <dbReference type="HAMAP-Rule" id="MF_01018"/>
    </source>
</evidence>
<feature type="chain" id="PRO_1000135269" description="ATP phosphoribosyltransferase">
    <location>
        <begin position="1"/>
        <end position="211"/>
    </location>
</feature>
<comment type="function">
    <text evidence="1">Catalyzes the condensation of ATP and 5-phosphoribose 1-diphosphate to form N'-(5'-phosphoribosyl)-ATP (PR-ATP). Has a crucial role in the pathway because the rate of histidine biosynthesis seems to be controlled primarily by regulation of HisG enzymatic activity.</text>
</comment>
<comment type="catalytic activity">
    <reaction evidence="1">
        <text>1-(5-phospho-beta-D-ribosyl)-ATP + diphosphate = 5-phospho-alpha-D-ribose 1-diphosphate + ATP</text>
        <dbReference type="Rhea" id="RHEA:18473"/>
        <dbReference type="ChEBI" id="CHEBI:30616"/>
        <dbReference type="ChEBI" id="CHEBI:33019"/>
        <dbReference type="ChEBI" id="CHEBI:58017"/>
        <dbReference type="ChEBI" id="CHEBI:73183"/>
        <dbReference type="EC" id="2.4.2.17"/>
    </reaction>
</comment>
<comment type="pathway">
    <text evidence="1">Amino-acid biosynthesis; L-histidine biosynthesis; L-histidine from 5-phospho-alpha-D-ribose 1-diphosphate: step 1/9.</text>
</comment>
<comment type="subunit">
    <text evidence="1">Heteromultimer composed of HisG and HisZ subunits.</text>
</comment>
<comment type="subcellular location">
    <subcellularLocation>
        <location evidence="1">Cytoplasm</location>
    </subcellularLocation>
</comment>
<comment type="domain">
    <text>Lacks the C-terminal regulatory region which is replaced by HisZ.</text>
</comment>
<comment type="similarity">
    <text evidence="1">Belongs to the ATP phosphoribosyltransferase family. Short subfamily.</text>
</comment>
<protein>
    <recommendedName>
        <fullName evidence="1">ATP phosphoribosyltransferase</fullName>
        <shortName evidence="1">ATP-PRT</shortName>
        <shortName evidence="1">ATP-PRTase</shortName>
        <ecNumber evidence="1">2.4.2.17</ecNumber>
    </recommendedName>
</protein>
<gene>
    <name evidence="1" type="primary">hisG</name>
    <name type="ordered locus">BCAH187_A1564</name>
</gene>
<name>HIS1_BACC7</name>
<organism>
    <name type="scientific">Bacillus cereus (strain AH187)</name>
    <dbReference type="NCBI Taxonomy" id="405534"/>
    <lineage>
        <taxon>Bacteria</taxon>
        <taxon>Bacillati</taxon>
        <taxon>Bacillota</taxon>
        <taxon>Bacilli</taxon>
        <taxon>Bacillales</taxon>
        <taxon>Bacillaceae</taxon>
        <taxon>Bacillus</taxon>
        <taxon>Bacillus cereus group</taxon>
    </lineage>
</organism>